<protein>
    <recommendedName>
        <fullName evidence="1">Glycine--tRNA ligase beta subunit</fullName>
        <ecNumber evidence="1">6.1.1.14</ecNumber>
    </recommendedName>
    <alternativeName>
        <fullName evidence="1">Glycyl-tRNA synthetase beta subunit</fullName>
        <shortName evidence="1">GlyRS</shortName>
    </alternativeName>
</protein>
<feature type="chain" id="PRO_1000197198" description="Glycine--tRNA ligase beta subunit">
    <location>
        <begin position="1"/>
        <end position="689"/>
    </location>
</feature>
<proteinExistence type="inferred from homology"/>
<organism>
    <name type="scientific">Escherichia coli O81 (strain ED1a)</name>
    <dbReference type="NCBI Taxonomy" id="585397"/>
    <lineage>
        <taxon>Bacteria</taxon>
        <taxon>Pseudomonadati</taxon>
        <taxon>Pseudomonadota</taxon>
        <taxon>Gammaproteobacteria</taxon>
        <taxon>Enterobacterales</taxon>
        <taxon>Enterobacteriaceae</taxon>
        <taxon>Escherichia</taxon>
    </lineage>
</organism>
<keyword id="KW-0030">Aminoacyl-tRNA synthetase</keyword>
<keyword id="KW-0067">ATP-binding</keyword>
<keyword id="KW-0963">Cytoplasm</keyword>
<keyword id="KW-0436">Ligase</keyword>
<keyword id="KW-0547">Nucleotide-binding</keyword>
<keyword id="KW-0648">Protein biosynthesis</keyword>
<dbReference type="EC" id="6.1.1.14" evidence="1"/>
<dbReference type="EMBL" id="CU928162">
    <property type="protein sequence ID" value="CAR10231.1"/>
    <property type="molecule type" value="Genomic_DNA"/>
</dbReference>
<dbReference type="RefSeq" id="WP_001291788.1">
    <property type="nucleotide sequence ID" value="NC_011745.1"/>
</dbReference>
<dbReference type="SMR" id="B7N1L1"/>
<dbReference type="GeneID" id="75173758"/>
<dbReference type="KEGG" id="ecq:ECED1_4242"/>
<dbReference type="HOGENOM" id="CLU_007220_2_2_6"/>
<dbReference type="Proteomes" id="UP000000748">
    <property type="component" value="Chromosome"/>
</dbReference>
<dbReference type="GO" id="GO:0005829">
    <property type="term" value="C:cytosol"/>
    <property type="evidence" value="ECO:0007669"/>
    <property type="project" value="TreeGrafter"/>
</dbReference>
<dbReference type="GO" id="GO:0004814">
    <property type="term" value="F:arginine-tRNA ligase activity"/>
    <property type="evidence" value="ECO:0007669"/>
    <property type="project" value="InterPro"/>
</dbReference>
<dbReference type="GO" id="GO:0005524">
    <property type="term" value="F:ATP binding"/>
    <property type="evidence" value="ECO:0007669"/>
    <property type="project" value="UniProtKB-UniRule"/>
</dbReference>
<dbReference type="GO" id="GO:0004820">
    <property type="term" value="F:glycine-tRNA ligase activity"/>
    <property type="evidence" value="ECO:0007669"/>
    <property type="project" value="UniProtKB-UniRule"/>
</dbReference>
<dbReference type="GO" id="GO:0006420">
    <property type="term" value="P:arginyl-tRNA aminoacylation"/>
    <property type="evidence" value="ECO:0007669"/>
    <property type="project" value="InterPro"/>
</dbReference>
<dbReference type="GO" id="GO:0006426">
    <property type="term" value="P:glycyl-tRNA aminoacylation"/>
    <property type="evidence" value="ECO:0007669"/>
    <property type="project" value="UniProtKB-UniRule"/>
</dbReference>
<dbReference type="HAMAP" id="MF_00255">
    <property type="entry name" value="Gly_tRNA_synth_beta"/>
    <property type="match status" value="1"/>
</dbReference>
<dbReference type="InterPro" id="IPR008909">
    <property type="entry name" value="DALR_anticod-bd"/>
</dbReference>
<dbReference type="InterPro" id="IPR015944">
    <property type="entry name" value="Gly-tRNA-synth_bsu"/>
</dbReference>
<dbReference type="InterPro" id="IPR006194">
    <property type="entry name" value="Gly-tRNA-synth_heterodimer"/>
</dbReference>
<dbReference type="NCBIfam" id="TIGR00211">
    <property type="entry name" value="glyS"/>
    <property type="match status" value="1"/>
</dbReference>
<dbReference type="PANTHER" id="PTHR30075:SF2">
    <property type="entry name" value="GLYCINE--TRNA LIGASE, CHLOROPLASTIC_MITOCHONDRIAL 2"/>
    <property type="match status" value="1"/>
</dbReference>
<dbReference type="PANTHER" id="PTHR30075">
    <property type="entry name" value="GLYCYL-TRNA SYNTHETASE"/>
    <property type="match status" value="1"/>
</dbReference>
<dbReference type="Pfam" id="PF05746">
    <property type="entry name" value="DALR_1"/>
    <property type="match status" value="1"/>
</dbReference>
<dbReference type="Pfam" id="PF02092">
    <property type="entry name" value="tRNA_synt_2f"/>
    <property type="match status" value="1"/>
</dbReference>
<dbReference type="PRINTS" id="PR01045">
    <property type="entry name" value="TRNASYNTHGB"/>
</dbReference>
<dbReference type="SUPFAM" id="SSF109604">
    <property type="entry name" value="HD-domain/PDEase-like"/>
    <property type="match status" value="1"/>
</dbReference>
<dbReference type="PROSITE" id="PS50861">
    <property type="entry name" value="AA_TRNA_LIGASE_II_GLYAB"/>
    <property type="match status" value="1"/>
</dbReference>
<reference key="1">
    <citation type="journal article" date="2009" name="PLoS Genet.">
        <title>Organised genome dynamics in the Escherichia coli species results in highly diverse adaptive paths.</title>
        <authorList>
            <person name="Touchon M."/>
            <person name="Hoede C."/>
            <person name="Tenaillon O."/>
            <person name="Barbe V."/>
            <person name="Baeriswyl S."/>
            <person name="Bidet P."/>
            <person name="Bingen E."/>
            <person name="Bonacorsi S."/>
            <person name="Bouchier C."/>
            <person name="Bouvet O."/>
            <person name="Calteau A."/>
            <person name="Chiapello H."/>
            <person name="Clermont O."/>
            <person name="Cruveiller S."/>
            <person name="Danchin A."/>
            <person name="Diard M."/>
            <person name="Dossat C."/>
            <person name="Karoui M.E."/>
            <person name="Frapy E."/>
            <person name="Garry L."/>
            <person name="Ghigo J.M."/>
            <person name="Gilles A.M."/>
            <person name="Johnson J."/>
            <person name="Le Bouguenec C."/>
            <person name="Lescat M."/>
            <person name="Mangenot S."/>
            <person name="Martinez-Jehanne V."/>
            <person name="Matic I."/>
            <person name="Nassif X."/>
            <person name="Oztas S."/>
            <person name="Petit M.A."/>
            <person name="Pichon C."/>
            <person name="Rouy Z."/>
            <person name="Ruf C.S."/>
            <person name="Schneider D."/>
            <person name="Tourret J."/>
            <person name="Vacherie B."/>
            <person name="Vallenet D."/>
            <person name="Medigue C."/>
            <person name="Rocha E.P.C."/>
            <person name="Denamur E."/>
        </authorList>
    </citation>
    <scope>NUCLEOTIDE SEQUENCE [LARGE SCALE GENOMIC DNA]</scope>
    <source>
        <strain>ED1a</strain>
    </source>
</reference>
<sequence length="689" mass="76813">MSEKTFLVEIGTEELPPKALRSLAESFAANFTAELDNAGLAHGTVQWFAAPRRLALKVANLAEAQPDREIEKRGPAIAQAFDAEGKPSKAAEGWARGCGITVDQAERLTTDKGEWLLYRAHVKGESTEALLPNMVATSLAKLPIPKLMRWGASDVHFVRPVHTVTLLLGDKVIPATILGIQSDRVIRGHRFMGEPEFTIDNADQYPEILRERGKVIADYEERKAKIKADAEEAARKIGGNADLSESLLEEVASLVEWPVVLTAKFEEKFLAVPSEALVYTMKGDQKYFPVYANDGKLLPNFIFVANIESKDPQQIISGNEKVVRPRLADAEFFFNTDRKKRLEDNLPRLQTVLFQQQLGTLRDKTDRIQALAGWIAEQIGADVNHATRAGLLSKCDLMTNMVFEFTDTQGVMGMHYARHDGEAEDVAVALNEQYQPRFAGDDLPSNPVACALAIADKMDTLAGIFGIGQHPKGDKDPFALRRAALGVLRIIVEKNLNLDLQTLTEEAVRLYGDKLTNANVVDDVIDFMLGRFRAWYQDEGYTVDTIQAVLARRPTRPADFDARMKAVSHFRTLEAAAALAAANKRVSNILAKSDEVLSDRVNASTLKEPEEIKLAMQVVVLRDKLEPYFAEGRYQDALVELAELREPVDAFFDKVMVMVDDKELRINRLTMLEKLRELFLRVADISLLQ</sequence>
<gene>
    <name evidence="1" type="primary">glyS</name>
    <name type="ordered locus">ECED1_4242</name>
</gene>
<evidence type="ECO:0000255" key="1">
    <source>
        <dbReference type="HAMAP-Rule" id="MF_00255"/>
    </source>
</evidence>
<accession>B7N1L1</accession>
<comment type="catalytic activity">
    <reaction evidence="1">
        <text>tRNA(Gly) + glycine + ATP = glycyl-tRNA(Gly) + AMP + diphosphate</text>
        <dbReference type="Rhea" id="RHEA:16013"/>
        <dbReference type="Rhea" id="RHEA-COMP:9664"/>
        <dbReference type="Rhea" id="RHEA-COMP:9683"/>
        <dbReference type="ChEBI" id="CHEBI:30616"/>
        <dbReference type="ChEBI" id="CHEBI:33019"/>
        <dbReference type="ChEBI" id="CHEBI:57305"/>
        <dbReference type="ChEBI" id="CHEBI:78442"/>
        <dbReference type="ChEBI" id="CHEBI:78522"/>
        <dbReference type="ChEBI" id="CHEBI:456215"/>
        <dbReference type="EC" id="6.1.1.14"/>
    </reaction>
</comment>
<comment type="subunit">
    <text evidence="1">Tetramer of two alpha and two beta subunits.</text>
</comment>
<comment type="subcellular location">
    <subcellularLocation>
        <location evidence="1">Cytoplasm</location>
    </subcellularLocation>
</comment>
<comment type="similarity">
    <text evidence="1">Belongs to the class-II aminoacyl-tRNA synthetase family.</text>
</comment>
<name>SYGB_ECO81</name>